<organism>
    <name type="scientific">Bacillus anthracis (strain CDC 684 / NRRL 3495)</name>
    <dbReference type="NCBI Taxonomy" id="568206"/>
    <lineage>
        <taxon>Bacteria</taxon>
        <taxon>Bacillati</taxon>
        <taxon>Bacillota</taxon>
        <taxon>Bacilli</taxon>
        <taxon>Bacillales</taxon>
        <taxon>Bacillaceae</taxon>
        <taxon>Bacillus</taxon>
        <taxon>Bacillus cereus group</taxon>
    </lineage>
</organism>
<dbReference type="EC" id="2.4.2.9" evidence="1"/>
<dbReference type="EMBL" id="CP001215">
    <property type="protein sequence ID" value="ACP15195.1"/>
    <property type="molecule type" value="Genomic_DNA"/>
</dbReference>
<dbReference type="RefSeq" id="WP_000517539.1">
    <property type="nucleotide sequence ID" value="NC_012581.1"/>
</dbReference>
<dbReference type="SMR" id="C3LFI9"/>
<dbReference type="GeneID" id="93005808"/>
<dbReference type="KEGG" id="bah:BAMEG_5604"/>
<dbReference type="HOGENOM" id="CLU_067096_2_2_9"/>
<dbReference type="UniPathway" id="UPA00574">
    <property type="reaction ID" value="UER00636"/>
</dbReference>
<dbReference type="GO" id="GO:0005525">
    <property type="term" value="F:GTP binding"/>
    <property type="evidence" value="ECO:0007669"/>
    <property type="project" value="UniProtKB-KW"/>
</dbReference>
<dbReference type="GO" id="GO:0000287">
    <property type="term" value="F:magnesium ion binding"/>
    <property type="evidence" value="ECO:0007669"/>
    <property type="project" value="UniProtKB-UniRule"/>
</dbReference>
<dbReference type="GO" id="GO:0004845">
    <property type="term" value="F:uracil phosphoribosyltransferase activity"/>
    <property type="evidence" value="ECO:0007669"/>
    <property type="project" value="UniProtKB-UniRule"/>
</dbReference>
<dbReference type="GO" id="GO:0044206">
    <property type="term" value="P:UMP salvage"/>
    <property type="evidence" value="ECO:0007669"/>
    <property type="project" value="UniProtKB-UniRule"/>
</dbReference>
<dbReference type="GO" id="GO:0006223">
    <property type="term" value="P:uracil salvage"/>
    <property type="evidence" value="ECO:0007669"/>
    <property type="project" value="InterPro"/>
</dbReference>
<dbReference type="CDD" id="cd06223">
    <property type="entry name" value="PRTases_typeI"/>
    <property type="match status" value="1"/>
</dbReference>
<dbReference type="FunFam" id="3.40.50.2020:FF:000003">
    <property type="entry name" value="Uracil phosphoribosyltransferase"/>
    <property type="match status" value="1"/>
</dbReference>
<dbReference type="Gene3D" id="3.40.50.2020">
    <property type="match status" value="1"/>
</dbReference>
<dbReference type="HAMAP" id="MF_01218_B">
    <property type="entry name" value="Upp_B"/>
    <property type="match status" value="1"/>
</dbReference>
<dbReference type="InterPro" id="IPR000836">
    <property type="entry name" value="PRibTrfase_dom"/>
</dbReference>
<dbReference type="InterPro" id="IPR029057">
    <property type="entry name" value="PRTase-like"/>
</dbReference>
<dbReference type="InterPro" id="IPR034332">
    <property type="entry name" value="Upp_B"/>
</dbReference>
<dbReference type="InterPro" id="IPR050054">
    <property type="entry name" value="UPRTase/APRTase"/>
</dbReference>
<dbReference type="InterPro" id="IPR005765">
    <property type="entry name" value="Ura_phspho_trans"/>
</dbReference>
<dbReference type="NCBIfam" id="NF001097">
    <property type="entry name" value="PRK00129.1"/>
    <property type="match status" value="1"/>
</dbReference>
<dbReference type="NCBIfam" id="TIGR01091">
    <property type="entry name" value="upp"/>
    <property type="match status" value="1"/>
</dbReference>
<dbReference type="PANTHER" id="PTHR32315">
    <property type="entry name" value="ADENINE PHOSPHORIBOSYLTRANSFERASE"/>
    <property type="match status" value="1"/>
</dbReference>
<dbReference type="PANTHER" id="PTHR32315:SF4">
    <property type="entry name" value="URACIL PHOSPHORIBOSYLTRANSFERASE, CHLOROPLASTIC"/>
    <property type="match status" value="1"/>
</dbReference>
<dbReference type="Pfam" id="PF14681">
    <property type="entry name" value="UPRTase"/>
    <property type="match status" value="1"/>
</dbReference>
<dbReference type="SUPFAM" id="SSF53271">
    <property type="entry name" value="PRTase-like"/>
    <property type="match status" value="1"/>
</dbReference>
<keyword id="KW-0021">Allosteric enzyme</keyword>
<keyword id="KW-0328">Glycosyltransferase</keyword>
<keyword id="KW-0342">GTP-binding</keyword>
<keyword id="KW-0460">Magnesium</keyword>
<keyword id="KW-0547">Nucleotide-binding</keyword>
<keyword id="KW-0808">Transferase</keyword>
<gene>
    <name evidence="1" type="primary">upp</name>
    <name type="ordered locus">BAMEG_5604</name>
</gene>
<sequence>MGKLYVFDHPLIQHKITYIRDKNTGTKDFRELVDEVASLMAFEITRDLPLKDIEIETPVSKATTKVIAGKKLGLIPILRAGLGMVDGILKLIPAAKVGHVGLYRDPKTLQPVEYYVKLPTDVEERDFIVLDPMLATGGSAAEAINSLKKRGAKQIKLMCIVAAPEGVKVVQEEHPDVDIYVAALDEKLNDHGYVVPGLGDAGDRLFGTK</sequence>
<name>UPP_BACAC</name>
<feature type="chain" id="PRO_1000164808" description="Uracil phosphoribosyltransferase">
    <location>
        <begin position="1"/>
        <end position="209"/>
    </location>
</feature>
<feature type="binding site" evidence="1">
    <location>
        <position position="79"/>
    </location>
    <ligand>
        <name>5-phospho-alpha-D-ribose 1-diphosphate</name>
        <dbReference type="ChEBI" id="CHEBI:58017"/>
    </ligand>
</feature>
<feature type="binding site" evidence="1">
    <location>
        <position position="104"/>
    </location>
    <ligand>
        <name>5-phospho-alpha-D-ribose 1-diphosphate</name>
        <dbReference type="ChEBI" id="CHEBI:58017"/>
    </ligand>
</feature>
<feature type="binding site" evidence="1">
    <location>
        <begin position="131"/>
        <end position="139"/>
    </location>
    <ligand>
        <name>5-phospho-alpha-D-ribose 1-diphosphate</name>
        <dbReference type="ChEBI" id="CHEBI:58017"/>
    </ligand>
</feature>
<feature type="binding site" evidence="1">
    <location>
        <position position="194"/>
    </location>
    <ligand>
        <name>uracil</name>
        <dbReference type="ChEBI" id="CHEBI:17568"/>
    </ligand>
</feature>
<feature type="binding site" evidence="1">
    <location>
        <begin position="199"/>
        <end position="201"/>
    </location>
    <ligand>
        <name>uracil</name>
        <dbReference type="ChEBI" id="CHEBI:17568"/>
    </ligand>
</feature>
<feature type="binding site" evidence="1">
    <location>
        <position position="200"/>
    </location>
    <ligand>
        <name>5-phospho-alpha-D-ribose 1-diphosphate</name>
        <dbReference type="ChEBI" id="CHEBI:58017"/>
    </ligand>
</feature>
<protein>
    <recommendedName>
        <fullName evidence="1">Uracil phosphoribosyltransferase</fullName>
        <ecNumber evidence="1">2.4.2.9</ecNumber>
    </recommendedName>
    <alternativeName>
        <fullName evidence="1">UMP pyrophosphorylase</fullName>
    </alternativeName>
    <alternativeName>
        <fullName evidence="1">UPRTase</fullName>
    </alternativeName>
</protein>
<reference key="1">
    <citation type="submission" date="2008-10" db="EMBL/GenBank/DDBJ databases">
        <title>Genome sequence of Bacillus anthracis str. CDC 684.</title>
        <authorList>
            <person name="Dodson R.J."/>
            <person name="Munk A.C."/>
            <person name="Brettin T."/>
            <person name="Bruce D."/>
            <person name="Detter C."/>
            <person name="Tapia R."/>
            <person name="Han C."/>
            <person name="Sutton G."/>
            <person name="Sims D."/>
        </authorList>
    </citation>
    <scope>NUCLEOTIDE SEQUENCE [LARGE SCALE GENOMIC DNA]</scope>
    <source>
        <strain>CDC 684 / NRRL 3495</strain>
    </source>
</reference>
<comment type="function">
    <text evidence="1">Catalyzes the conversion of uracil and 5-phospho-alpha-D-ribose 1-diphosphate (PRPP) to UMP and diphosphate.</text>
</comment>
<comment type="catalytic activity">
    <reaction evidence="1">
        <text>UMP + diphosphate = 5-phospho-alpha-D-ribose 1-diphosphate + uracil</text>
        <dbReference type="Rhea" id="RHEA:13017"/>
        <dbReference type="ChEBI" id="CHEBI:17568"/>
        <dbReference type="ChEBI" id="CHEBI:33019"/>
        <dbReference type="ChEBI" id="CHEBI:57865"/>
        <dbReference type="ChEBI" id="CHEBI:58017"/>
        <dbReference type="EC" id="2.4.2.9"/>
    </reaction>
</comment>
<comment type="cofactor">
    <cofactor evidence="1">
        <name>Mg(2+)</name>
        <dbReference type="ChEBI" id="CHEBI:18420"/>
    </cofactor>
    <text evidence="1">Binds 1 Mg(2+) ion per subunit. The magnesium is bound as Mg-PRPP.</text>
</comment>
<comment type="activity regulation">
    <text evidence="1">Allosterically activated by GTP.</text>
</comment>
<comment type="pathway">
    <text evidence="1">Pyrimidine metabolism; UMP biosynthesis via salvage pathway; UMP from uracil: step 1/1.</text>
</comment>
<comment type="similarity">
    <text evidence="1">Belongs to the UPRTase family.</text>
</comment>
<accession>C3LFI9</accession>
<evidence type="ECO:0000255" key="1">
    <source>
        <dbReference type="HAMAP-Rule" id="MF_01218"/>
    </source>
</evidence>
<proteinExistence type="inferred from homology"/>